<keyword id="KW-0997">Cell inner membrane</keyword>
<keyword id="KW-1003">Cell membrane</keyword>
<keyword id="KW-0143">Chaperone</keyword>
<keyword id="KW-0472">Membrane</keyword>
<keyword id="KW-0653">Protein transport</keyword>
<keyword id="KW-0812">Transmembrane</keyword>
<keyword id="KW-1133">Transmembrane helix</keyword>
<keyword id="KW-0813">Transport</keyword>
<organism>
    <name type="scientific">Nitratidesulfovibrio vulgaris (strain DP4)</name>
    <name type="common">Desulfovibrio vulgaris</name>
    <dbReference type="NCBI Taxonomy" id="391774"/>
    <lineage>
        <taxon>Bacteria</taxon>
        <taxon>Pseudomonadati</taxon>
        <taxon>Thermodesulfobacteriota</taxon>
        <taxon>Desulfovibrionia</taxon>
        <taxon>Desulfovibrionales</taxon>
        <taxon>Desulfovibrionaceae</taxon>
        <taxon>Nitratidesulfovibrio</taxon>
    </lineage>
</organism>
<comment type="function">
    <text evidence="1">Required for the insertion and/or proper folding and/or complex formation of integral membrane proteins into the membrane. Involved in integration of membrane proteins that insert both dependently and independently of the Sec translocase complex, as well as at least some lipoproteins. Aids folding of multispanning membrane proteins.</text>
</comment>
<comment type="subunit">
    <text evidence="1">Interacts with the Sec translocase complex via SecD. Specifically interacts with transmembrane segments of nascent integral membrane proteins during membrane integration.</text>
</comment>
<comment type="subcellular location">
    <subcellularLocation>
        <location evidence="1">Cell inner membrane</location>
        <topology evidence="1">Multi-pass membrane protein</topology>
    </subcellularLocation>
</comment>
<comment type="similarity">
    <text evidence="1">Belongs to the OXA1/ALB3/YidC family. Type 1 subfamily.</text>
</comment>
<dbReference type="EMBL" id="CP000527">
    <property type="protein sequence ID" value="ABM28933.1"/>
    <property type="molecule type" value="Genomic_DNA"/>
</dbReference>
<dbReference type="RefSeq" id="WP_010938376.1">
    <property type="nucleotide sequence ID" value="NC_008751.1"/>
</dbReference>
<dbReference type="SMR" id="A1VER7"/>
<dbReference type="KEGG" id="dvl:Dvul_1917"/>
<dbReference type="HOGENOM" id="CLU_016535_3_0_7"/>
<dbReference type="Proteomes" id="UP000009173">
    <property type="component" value="Chromosome"/>
</dbReference>
<dbReference type="GO" id="GO:0005886">
    <property type="term" value="C:plasma membrane"/>
    <property type="evidence" value="ECO:0007669"/>
    <property type="project" value="UniProtKB-SubCell"/>
</dbReference>
<dbReference type="GO" id="GO:0032977">
    <property type="term" value="F:membrane insertase activity"/>
    <property type="evidence" value="ECO:0007669"/>
    <property type="project" value="InterPro"/>
</dbReference>
<dbReference type="GO" id="GO:0051205">
    <property type="term" value="P:protein insertion into membrane"/>
    <property type="evidence" value="ECO:0007669"/>
    <property type="project" value="TreeGrafter"/>
</dbReference>
<dbReference type="GO" id="GO:0015031">
    <property type="term" value="P:protein transport"/>
    <property type="evidence" value="ECO:0007669"/>
    <property type="project" value="UniProtKB-KW"/>
</dbReference>
<dbReference type="CDD" id="cd20070">
    <property type="entry name" value="5TM_YidC_Alb3"/>
    <property type="match status" value="1"/>
</dbReference>
<dbReference type="CDD" id="cd19961">
    <property type="entry name" value="EcYidC-like_peri"/>
    <property type="match status" value="1"/>
</dbReference>
<dbReference type="Gene3D" id="2.70.98.90">
    <property type="match status" value="1"/>
</dbReference>
<dbReference type="HAMAP" id="MF_01810">
    <property type="entry name" value="YidC_type1"/>
    <property type="match status" value="1"/>
</dbReference>
<dbReference type="InterPro" id="IPR019998">
    <property type="entry name" value="Membr_insert_YidC"/>
</dbReference>
<dbReference type="InterPro" id="IPR028053">
    <property type="entry name" value="Membr_insert_YidC_N"/>
</dbReference>
<dbReference type="InterPro" id="IPR001708">
    <property type="entry name" value="YidC/ALB3/OXA1/COX18"/>
</dbReference>
<dbReference type="InterPro" id="IPR028055">
    <property type="entry name" value="YidC/Oxa/ALB_C"/>
</dbReference>
<dbReference type="InterPro" id="IPR047196">
    <property type="entry name" value="YidC_ALB_C"/>
</dbReference>
<dbReference type="InterPro" id="IPR038221">
    <property type="entry name" value="YidC_periplasmic_sf"/>
</dbReference>
<dbReference type="NCBIfam" id="TIGR03593">
    <property type="entry name" value="yidC_nterm"/>
    <property type="match status" value="1"/>
</dbReference>
<dbReference type="NCBIfam" id="TIGR03592">
    <property type="entry name" value="yidC_oxa1_cterm"/>
    <property type="match status" value="1"/>
</dbReference>
<dbReference type="PANTHER" id="PTHR12428:SF65">
    <property type="entry name" value="CYTOCHROME C OXIDASE ASSEMBLY PROTEIN COX18, MITOCHONDRIAL"/>
    <property type="match status" value="1"/>
</dbReference>
<dbReference type="PANTHER" id="PTHR12428">
    <property type="entry name" value="OXA1"/>
    <property type="match status" value="1"/>
</dbReference>
<dbReference type="Pfam" id="PF02096">
    <property type="entry name" value="60KD_IMP"/>
    <property type="match status" value="1"/>
</dbReference>
<dbReference type="Pfam" id="PF14849">
    <property type="entry name" value="YidC_periplas"/>
    <property type="match status" value="1"/>
</dbReference>
<dbReference type="PRINTS" id="PR00701">
    <property type="entry name" value="60KDINNERMP"/>
</dbReference>
<dbReference type="PRINTS" id="PR01900">
    <property type="entry name" value="YIDCPROTEIN"/>
</dbReference>
<name>YIDC_NITV4</name>
<feature type="chain" id="PRO_1000215969" description="Membrane protein insertase YidC">
    <location>
        <begin position="1"/>
        <end position="534"/>
    </location>
</feature>
<feature type="transmembrane region" description="Helical" evidence="1">
    <location>
        <begin position="7"/>
        <end position="27"/>
    </location>
</feature>
<feature type="transmembrane region" description="Helical" evidence="1">
    <location>
        <begin position="319"/>
        <end position="339"/>
    </location>
</feature>
<feature type="transmembrane region" description="Helical" evidence="1">
    <location>
        <begin position="342"/>
        <end position="362"/>
    </location>
</feature>
<feature type="transmembrane region" description="Helical" evidence="1">
    <location>
        <begin position="413"/>
        <end position="433"/>
    </location>
</feature>
<feature type="transmembrane region" description="Helical" evidence="1">
    <location>
        <begin position="493"/>
        <end position="513"/>
    </location>
</feature>
<sequence>MENKRAIIAVVLSFIVLVGWGYLSEYMGWTPKSVPATEQKTAASAPAPSVVTSAPEAVTPAPAFSPSTGHEVTVTTPLYKAVLHSGGGVLRQFMLSRYHMGIDRDAAPVNLIESSAIRVAPLGLLVNGQPSWNTGQWAFEGGDLNLADGQTGTLRFVGSVDGLRVVRELEFHADSYLVTEKLHLAPEGDAPRTARVGFTLGTTSLTPGESQYNLTRVAWFADGSFSEKSSTGDLEKGVLIDGSIDWAGVMSNYFLAAVAPKDTRAVLKGKLEGGVYRVAVERPDQMVNPGNSDVIVCNYWFGPKERDLLNAAPNNLGKAIDLGWFGFIARPLVTLLDFFYKYVGNYGTAIILLTILIKLVFWPLSHKSYKSMEQMKKLQPMLAKVREKHADDREKMNEEMMRLYKTYKVNPAGGCLPMLVQIPVFFGLYQALLNAIELRHAPFIAHVPFTDIVWLADLSAKDPFYVTPLVMGATMFLQQKLTPPAGDPTQAKVMMFMPVVFTFLFLNFPSGLVVYWLCNNVLSIAQQWWILRKA</sequence>
<protein>
    <recommendedName>
        <fullName evidence="1">Membrane protein insertase YidC</fullName>
    </recommendedName>
    <alternativeName>
        <fullName evidence="1">Foldase YidC</fullName>
    </alternativeName>
    <alternativeName>
        <fullName evidence="1">Membrane integrase YidC</fullName>
    </alternativeName>
    <alternativeName>
        <fullName evidence="1">Membrane protein YidC</fullName>
    </alternativeName>
</protein>
<reference key="1">
    <citation type="journal article" date="2009" name="Environ. Microbiol.">
        <title>Contribution of mobile genetic elements to Desulfovibrio vulgaris genome plasticity.</title>
        <authorList>
            <person name="Walker C.B."/>
            <person name="Stolyar S."/>
            <person name="Chivian D."/>
            <person name="Pinel N."/>
            <person name="Gabster J.A."/>
            <person name="Dehal P.S."/>
            <person name="He Z."/>
            <person name="Yang Z.K."/>
            <person name="Yen H.C."/>
            <person name="Zhou J."/>
            <person name="Wall J.D."/>
            <person name="Hazen T.C."/>
            <person name="Arkin A.P."/>
            <person name="Stahl D.A."/>
        </authorList>
    </citation>
    <scope>NUCLEOTIDE SEQUENCE [LARGE SCALE GENOMIC DNA]</scope>
    <source>
        <strain>DP4</strain>
    </source>
</reference>
<accession>A1VER7</accession>
<proteinExistence type="inferred from homology"/>
<evidence type="ECO:0000255" key="1">
    <source>
        <dbReference type="HAMAP-Rule" id="MF_01810"/>
    </source>
</evidence>
<gene>
    <name evidence="1" type="primary">yidC</name>
    <name type="ordered locus">Dvul_1917</name>
</gene>